<protein>
    <recommendedName>
        <fullName>Serine/threonine-protein phosphatase 2A regulatory subunit B'' subunit gamma</fullName>
    </recommendedName>
</protein>
<evidence type="ECO:0000250" key="1">
    <source>
        <dbReference type="UniProtKB" id="Q9JK24"/>
    </source>
</evidence>
<evidence type="ECO:0000255" key="2">
    <source>
        <dbReference type="PROSITE-ProRule" id="PRU10142"/>
    </source>
</evidence>
<name>P2R3C_XENTR</name>
<reference key="1">
    <citation type="submission" date="2006-10" db="EMBL/GenBank/DDBJ databases">
        <authorList>
            <consortium name="Sanger Xenopus tropicalis EST/cDNA project"/>
        </authorList>
    </citation>
    <scope>NUCLEOTIDE SEQUENCE [LARGE SCALE MRNA]</scope>
    <source>
        <tissue>Egg</tissue>
    </source>
</reference>
<reference key="2">
    <citation type="submission" date="2004-06" db="EMBL/GenBank/DDBJ databases">
        <authorList>
            <consortium name="NIH - Xenopus Gene Collection (XGC) project"/>
        </authorList>
    </citation>
    <scope>NUCLEOTIDE SEQUENCE [LARGE SCALE MRNA]</scope>
</reference>
<organism>
    <name type="scientific">Xenopus tropicalis</name>
    <name type="common">Western clawed frog</name>
    <name type="synonym">Silurana tropicalis</name>
    <dbReference type="NCBI Taxonomy" id="8364"/>
    <lineage>
        <taxon>Eukaryota</taxon>
        <taxon>Metazoa</taxon>
        <taxon>Chordata</taxon>
        <taxon>Craniata</taxon>
        <taxon>Vertebrata</taxon>
        <taxon>Euteleostomi</taxon>
        <taxon>Amphibia</taxon>
        <taxon>Batrachia</taxon>
        <taxon>Anura</taxon>
        <taxon>Pipoidea</taxon>
        <taxon>Pipidae</taxon>
        <taxon>Xenopodinae</taxon>
        <taxon>Xenopus</taxon>
        <taxon>Silurana</taxon>
    </lineage>
</organism>
<comment type="function">
    <text evidence="1">Possible role in the regulation of cell death.</text>
</comment>
<comment type="subcellular location">
    <subcellularLocation>
        <location evidence="1">Nucleus</location>
    </subcellularLocation>
    <subcellularLocation>
        <location evidence="1">Cytoplasm</location>
    </subcellularLocation>
</comment>
<proteinExistence type="evidence at transcript level"/>
<accession>Q6DJ05</accession>
<keyword id="KW-0106">Calcium</keyword>
<keyword id="KW-0963">Cytoplasm</keyword>
<keyword id="KW-0479">Metal-binding</keyword>
<keyword id="KW-0539">Nucleus</keyword>
<keyword id="KW-1185">Reference proteome</keyword>
<keyword id="KW-0677">Repeat</keyword>
<feature type="chain" id="PRO_0000277837" description="Serine/threonine-protein phosphatase 2A regulatory subunit B'' subunit gamma">
    <location>
        <begin position="1"/>
        <end position="448"/>
    </location>
</feature>
<feature type="domain" description="EF-hand 1">
    <location>
        <begin position="268"/>
        <end position="303"/>
    </location>
</feature>
<feature type="domain" description="EF-hand 2">
    <location>
        <begin position="336"/>
        <end position="371"/>
    </location>
</feature>
<feature type="binding site" evidence="2">
    <location>
        <position position="281"/>
    </location>
    <ligand>
        <name>Ca(2+)</name>
        <dbReference type="ChEBI" id="CHEBI:29108"/>
    </ligand>
</feature>
<feature type="binding site" evidence="2">
    <location>
        <position position="283"/>
    </location>
    <ligand>
        <name>Ca(2+)</name>
        <dbReference type="ChEBI" id="CHEBI:29108"/>
    </ligand>
</feature>
<feature type="binding site" evidence="2">
    <location>
        <position position="285"/>
    </location>
    <ligand>
        <name>Ca(2+)</name>
        <dbReference type="ChEBI" id="CHEBI:29108"/>
    </ligand>
</feature>
<feature type="binding site" evidence="2">
    <location>
        <position position="287"/>
    </location>
    <ligand>
        <name>Ca(2+)</name>
        <dbReference type="ChEBI" id="CHEBI:29108"/>
    </ligand>
</feature>
<feature type="binding site" evidence="2">
    <location>
        <position position="292"/>
    </location>
    <ligand>
        <name>Ca(2+)</name>
        <dbReference type="ChEBI" id="CHEBI:29108"/>
    </ligand>
</feature>
<gene>
    <name type="primary">ppp2r3c</name>
    <name type="ORF">TEgg038p23.1</name>
</gene>
<sequence>MDWKRSLKEKLRRDGYVRKSEQEMKEEEMSLFTNYYTEWKGGGKVSSAQNIPRFYYRLPAEDEVLQQKLREESRAVFLQRKSRELLDNEELQNLWFLLDKHQSPPLIGEEAMINYTNFQTVGEKAGEKCKTFFTSKVFSKLIPNDPYGRISIMQFFNYVMRKVWLHQTRIGLSLYDVAGQGYLRESDLENYILELIPTLPQLDGLEKSFYSFYVCTAVRKFFFFLDPLRTGKIKIQDILACSFLDDLLELRDEDLSKESQESNWFSAPSALRVYGQYLNLDKDHNGMLSKEELSRYGTGTLTCVFLDRVFQECLTYDGEMDYKTYLDFVLALENRKEPAALQYIFKLLDIENKGSLNVFSLNFFFRAIQEQMKIHGQEAVSFQDVKDEIFDMVKPKDPLRITLQDLIQSSQGDTVCSILIDLNGFWTYENREVLVANDGESPPDIDDT</sequence>
<dbReference type="EMBL" id="CR761377">
    <property type="protein sequence ID" value="CAJ83648.1"/>
    <property type="molecule type" value="mRNA"/>
</dbReference>
<dbReference type="EMBL" id="BC075380">
    <property type="protein sequence ID" value="AAH75380.1"/>
    <property type="molecule type" value="mRNA"/>
</dbReference>
<dbReference type="RefSeq" id="NP_001004923.1">
    <property type="nucleotide sequence ID" value="NM_001004923.1"/>
</dbReference>
<dbReference type="RefSeq" id="XP_012823659.1">
    <property type="nucleotide sequence ID" value="XM_012968205.3"/>
</dbReference>
<dbReference type="SMR" id="Q6DJ05"/>
<dbReference type="FunCoup" id="Q6DJ05">
    <property type="interactions" value="4259"/>
</dbReference>
<dbReference type="STRING" id="8364.ENSXETP00000051420"/>
<dbReference type="PaxDb" id="8364-ENSXETP00000026865"/>
<dbReference type="DNASU" id="448305"/>
<dbReference type="GeneID" id="448305"/>
<dbReference type="KEGG" id="xtr:448305"/>
<dbReference type="AGR" id="Xenbase:XB-GENE-1002945"/>
<dbReference type="CTD" id="55012"/>
<dbReference type="Xenbase" id="XB-GENE-1002945">
    <property type="gene designation" value="ppp2r3c"/>
</dbReference>
<dbReference type="eggNOG" id="KOG2562">
    <property type="taxonomic scope" value="Eukaryota"/>
</dbReference>
<dbReference type="HOGENOM" id="CLU_035365_1_0_1"/>
<dbReference type="InParanoid" id="Q6DJ05"/>
<dbReference type="OMA" id="HKFWAYE"/>
<dbReference type="OrthoDB" id="10265007at2759"/>
<dbReference type="PhylomeDB" id="Q6DJ05"/>
<dbReference type="Proteomes" id="UP000008143">
    <property type="component" value="Chromosome 8"/>
</dbReference>
<dbReference type="Bgee" id="ENSXETG00000012287">
    <property type="expression patterns" value="Expressed in testis and 14 other cell types or tissues"/>
</dbReference>
<dbReference type="GO" id="GO:0005737">
    <property type="term" value="C:cytoplasm"/>
    <property type="evidence" value="ECO:0007669"/>
    <property type="project" value="UniProtKB-SubCell"/>
</dbReference>
<dbReference type="GO" id="GO:0005634">
    <property type="term" value="C:nucleus"/>
    <property type="evidence" value="ECO:0007669"/>
    <property type="project" value="UniProtKB-SubCell"/>
</dbReference>
<dbReference type="GO" id="GO:0046872">
    <property type="term" value="F:metal ion binding"/>
    <property type="evidence" value="ECO:0007669"/>
    <property type="project" value="UniProtKB-KW"/>
</dbReference>
<dbReference type="GO" id="GO:0035303">
    <property type="term" value="P:regulation of dephosphorylation"/>
    <property type="evidence" value="ECO:0007669"/>
    <property type="project" value="InterPro"/>
</dbReference>
<dbReference type="CDD" id="cd21505">
    <property type="entry name" value="PPP2R3C"/>
    <property type="match status" value="1"/>
</dbReference>
<dbReference type="FunFam" id="1.10.238.10:FF:000091">
    <property type="entry name" value="Serine/threonine-protein phosphatase 2A regulatory subunit B'' subunit gamma"/>
    <property type="match status" value="1"/>
</dbReference>
<dbReference type="FunFam" id="1.10.238.220:FF:000002">
    <property type="entry name" value="Serine/threonine-protein phosphatase 2A regulatory subunit B'' subunit gamma"/>
    <property type="match status" value="1"/>
</dbReference>
<dbReference type="Gene3D" id="1.10.238.220">
    <property type="match status" value="1"/>
</dbReference>
<dbReference type="Gene3D" id="1.10.238.10">
    <property type="entry name" value="EF-hand"/>
    <property type="match status" value="1"/>
</dbReference>
<dbReference type="InterPro" id="IPR011992">
    <property type="entry name" value="EF-hand-dom_pair"/>
</dbReference>
<dbReference type="InterPro" id="IPR041534">
    <property type="entry name" value="EF-hand_13"/>
</dbReference>
<dbReference type="InterPro" id="IPR018247">
    <property type="entry name" value="EF_Hand_1_Ca_BS"/>
</dbReference>
<dbReference type="InterPro" id="IPR039865">
    <property type="entry name" value="PPP2R3C"/>
</dbReference>
<dbReference type="PANTHER" id="PTHR12085">
    <property type="entry name" value="SERINE/THREONINE-PROTEIN PHOSPHATASE 2A REGULATORY SUBUNIT B'' SUBUNIT GAMMA"/>
    <property type="match status" value="1"/>
</dbReference>
<dbReference type="PANTHER" id="PTHR12085:SF3">
    <property type="entry name" value="SERINE_THREONINE-PROTEIN PHOSPHATASE 2A REGULATORY SUBUNIT B'' SUBUNIT GAMMA"/>
    <property type="match status" value="1"/>
</dbReference>
<dbReference type="Pfam" id="PF17958">
    <property type="entry name" value="EF-hand_13"/>
    <property type="match status" value="1"/>
</dbReference>
<dbReference type="SUPFAM" id="SSF47473">
    <property type="entry name" value="EF-hand"/>
    <property type="match status" value="2"/>
</dbReference>
<dbReference type="PROSITE" id="PS00018">
    <property type="entry name" value="EF_HAND_1"/>
    <property type="match status" value="1"/>
</dbReference>